<organism>
    <name type="scientific">Drosophila melanogaster</name>
    <name type="common">Fruit fly</name>
    <dbReference type="NCBI Taxonomy" id="7227"/>
    <lineage>
        <taxon>Eukaryota</taxon>
        <taxon>Metazoa</taxon>
        <taxon>Ecdysozoa</taxon>
        <taxon>Arthropoda</taxon>
        <taxon>Hexapoda</taxon>
        <taxon>Insecta</taxon>
        <taxon>Pterygota</taxon>
        <taxon>Neoptera</taxon>
        <taxon>Endopterygota</taxon>
        <taxon>Diptera</taxon>
        <taxon>Brachycera</taxon>
        <taxon>Muscomorpha</taxon>
        <taxon>Ephydroidea</taxon>
        <taxon>Drosophilidae</taxon>
        <taxon>Drosophila</taxon>
        <taxon>Sophophora</taxon>
    </lineage>
</organism>
<accession>Q01643</accession>
<accession>Q8MZE2</accession>
<accession>Q9VIA1</accession>
<dbReference type="EMBL" id="X67703">
    <property type="protein sequence ID" value="CAA47938.1"/>
    <property type="molecule type" value="Genomic_DNA"/>
</dbReference>
<dbReference type="EMBL" id="AE014297">
    <property type="protein sequence ID" value="AAF54024.1"/>
    <property type="molecule type" value="Genomic_DNA"/>
</dbReference>
<dbReference type="EMBL" id="AY113221">
    <property type="protein sequence ID" value="AAM29226.1"/>
    <property type="status" value="ALT_SEQ"/>
    <property type="molecule type" value="mRNA"/>
</dbReference>
<dbReference type="PIR" id="S25773">
    <property type="entry name" value="S25773"/>
</dbReference>
<dbReference type="RefSeq" id="NP_524255.2">
    <property type="nucleotide sequence ID" value="NM_079531.3"/>
</dbReference>
<dbReference type="BioGRID" id="66079">
    <property type="interactions" value="32"/>
</dbReference>
<dbReference type="IntAct" id="Q01643">
    <property type="interactions" value="19"/>
</dbReference>
<dbReference type="DNASU" id="40888"/>
<dbReference type="EnsemblMetazoa" id="FBtr0081586">
    <property type="protein sequence ID" value="FBpp0081105"/>
    <property type="gene ID" value="FBgn0004173"/>
</dbReference>
<dbReference type="GeneID" id="40888"/>
<dbReference type="KEGG" id="dme:Dmel_CG17934"/>
<dbReference type="AGR" id="FB:FBgn0004173"/>
<dbReference type="CTD" id="40888"/>
<dbReference type="FlyBase" id="FBgn0004173">
    <property type="gene designation" value="Mst84Db"/>
</dbReference>
<dbReference type="VEuPathDB" id="VectorBase:FBgn0004173"/>
<dbReference type="HOGENOM" id="CLU_2690410_0_0_1"/>
<dbReference type="InParanoid" id="Q01643"/>
<dbReference type="OMA" id="CRDSNNG"/>
<dbReference type="BioGRID-ORCS" id="40888">
    <property type="hits" value="0 hits in 1 CRISPR screen"/>
</dbReference>
<dbReference type="ChiTaRS" id="Mst84Db">
    <property type="organism name" value="fly"/>
</dbReference>
<dbReference type="GenomeRNAi" id="40888"/>
<dbReference type="PRO" id="PR:Q01643"/>
<dbReference type="Proteomes" id="UP000000803">
    <property type="component" value="Chromosome 3R"/>
</dbReference>
<dbReference type="Bgee" id="FBgn0004173">
    <property type="expression patterns" value="Expressed in early-mid elongation-stage spermatid (Drosophila) in testis and 41 other cell types or tissues"/>
</dbReference>
<dbReference type="ExpressionAtlas" id="Q01643">
    <property type="expression patterns" value="baseline and differential"/>
</dbReference>
<dbReference type="GO" id="GO:0007288">
    <property type="term" value="P:sperm axoneme assembly"/>
    <property type="evidence" value="ECO:0000316"/>
    <property type="project" value="FlyBase"/>
</dbReference>
<dbReference type="GO" id="GO:0007283">
    <property type="term" value="P:spermatogenesis"/>
    <property type="evidence" value="ECO:0000316"/>
    <property type="project" value="FlyBase"/>
</dbReference>
<sequence length="74" mass="6725">MCCGPLGFCGPCSPCGGPCGPCGPCGPCGSCCSPCGSCCAPCGPCGPCGPCCGGCGPCGPCGPCCGPCRPYCGC</sequence>
<proteinExistence type="evidence at transcript level"/>
<comment type="tissue specificity">
    <text evidence="1">Testis.</text>
</comment>
<comment type="developmental stage">
    <text evidence="1">Primary spermatocytes.</text>
</comment>
<comment type="domain">
    <text>This protein is mostly composed of repetitive C-G-P motifs.</text>
</comment>
<comment type="similarity">
    <text evidence="2">Belongs to the MST(3)CGP family.</text>
</comment>
<comment type="sequence caution" evidence="2">
    <conflict type="erroneous translation">
        <sequence resource="EMBL-CDS" id="AAM29226"/>
    </conflict>
    <text>Wrong choice of frame.</text>
</comment>
<keyword id="KW-0217">Developmental protein</keyword>
<keyword id="KW-0221">Differentiation</keyword>
<keyword id="KW-1185">Reference proteome</keyword>
<keyword id="KW-0677">Repeat</keyword>
<keyword id="KW-0744">Spermatogenesis</keyword>
<protein>
    <recommendedName>
        <fullName>Male-specific sperm protein Mst84Db</fullName>
    </recommendedName>
</protein>
<gene>
    <name type="primary">Mst84Db</name>
    <name type="ORF">CG17934</name>
</gene>
<name>MS84B_DROME</name>
<reference key="1">
    <citation type="journal article" date="1991" name="Mech. Dev.">
        <title>A cluster of four genes selectively expressed in the male germ line of Drosophila melanogaster.</title>
        <authorList>
            <person name="Kuhn R."/>
            <person name="Kuhn C."/>
            <person name="Boersch D."/>
            <person name="Glaetzer K.H."/>
            <person name="Schaefer U."/>
            <person name="Schaefer M."/>
        </authorList>
    </citation>
    <scope>NUCLEOTIDE SEQUENCE [GENOMIC DNA]</scope>
    <scope>TISSUE SPECIFICITY</scope>
    <scope>DEVELOPMENTAL STAGE</scope>
    <source>
        <strain>Oregon-R</strain>
    </source>
</reference>
<reference key="2">
    <citation type="journal article" date="2000" name="Science">
        <title>The genome sequence of Drosophila melanogaster.</title>
        <authorList>
            <person name="Adams M.D."/>
            <person name="Celniker S.E."/>
            <person name="Holt R.A."/>
            <person name="Evans C.A."/>
            <person name="Gocayne J.D."/>
            <person name="Amanatides P.G."/>
            <person name="Scherer S.E."/>
            <person name="Li P.W."/>
            <person name="Hoskins R.A."/>
            <person name="Galle R.F."/>
            <person name="George R.A."/>
            <person name="Lewis S.E."/>
            <person name="Richards S."/>
            <person name="Ashburner M."/>
            <person name="Henderson S.N."/>
            <person name="Sutton G.G."/>
            <person name="Wortman J.R."/>
            <person name="Yandell M.D."/>
            <person name="Zhang Q."/>
            <person name="Chen L.X."/>
            <person name="Brandon R.C."/>
            <person name="Rogers Y.-H.C."/>
            <person name="Blazej R.G."/>
            <person name="Champe M."/>
            <person name="Pfeiffer B.D."/>
            <person name="Wan K.H."/>
            <person name="Doyle C."/>
            <person name="Baxter E.G."/>
            <person name="Helt G."/>
            <person name="Nelson C.R."/>
            <person name="Miklos G.L.G."/>
            <person name="Abril J.F."/>
            <person name="Agbayani A."/>
            <person name="An H.-J."/>
            <person name="Andrews-Pfannkoch C."/>
            <person name="Baldwin D."/>
            <person name="Ballew R.M."/>
            <person name="Basu A."/>
            <person name="Baxendale J."/>
            <person name="Bayraktaroglu L."/>
            <person name="Beasley E.M."/>
            <person name="Beeson K.Y."/>
            <person name="Benos P.V."/>
            <person name="Berman B.P."/>
            <person name="Bhandari D."/>
            <person name="Bolshakov S."/>
            <person name="Borkova D."/>
            <person name="Botchan M.R."/>
            <person name="Bouck J."/>
            <person name="Brokstein P."/>
            <person name="Brottier P."/>
            <person name="Burtis K.C."/>
            <person name="Busam D.A."/>
            <person name="Butler H."/>
            <person name="Cadieu E."/>
            <person name="Center A."/>
            <person name="Chandra I."/>
            <person name="Cherry J.M."/>
            <person name="Cawley S."/>
            <person name="Dahlke C."/>
            <person name="Davenport L.B."/>
            <person name="Davies P."/>
            <person name="de Pablos B."/>
            <person name="Delcher A."/>
            <person name="Deng Z."/>
            <person name="Mays A.D."/>
            <person name="Dew I."/>
            <person name="Dietz S.M."/>
            <person name="Dodson K."/>
            <person name="Doup L.E."/>
            <person name="Downes M."/>
            <person name="Dugan-Rocha S."/>
            <person name="Dunkov B.C."/>
            <person name="Dunn P."/>
            <person name="Durbin K.J."/>
            <person name="Evangelista C.C."/>
            <person name="Ferraz C."/>
            <person name="Ferriera S."/>
            <person name="Fleischmann W."/>
            <person name="Fosler C."/>
            <person name="Gabrielian A.E."/>
            <person name="Garg N.S."/>
            <person name="Gelbart W.M."/>
            <person name="Glasser K."/>
            <person name="Glodek A."/>
            <person name="Gong F."/>
            <person name="Gorrell J.H."/>
            <person name="Gu Z."/>
            <person name="Guan P."/>
            <person name="Harris M."/>
            <person name="Harris N.L."/>
            <person name="Harvey D.A."/>
            <person name="Heiman T.J."/>
            <person name="Hernandez J.R."/>
            <person name="Houck J."/>
            <person name="Hostin D."/>
            <person name="Houston K.A."/>
            <person name="Howland T.J."/>
            <person name="Wei M.-H."/>
            <person name="Ibegwam C."/>
            <person name="Jalali M."/>
            <person name="Kalush F."/>
            <person name="Karpen G.H."/>
            <person name="Ke Z."/>
            <person name="Kennison J.A."/>
            <person name="Ketchum K.A."/>
            <person name="Kimmel B.E."/>
            <person name="Kodira C.D."/>
            <person name="Kraft C.L."/>
            <person name="Kravitz S."/>
            <person name="Kulp D."/>
            <person name="Lai Z."/>
            <person name="Lasko P."/>
            <person name="Lei Y."/>
            <person name="Levitsky A.A."/>
            <person name="Li J.H."/>
            <person name="Li Z."/>
            <person name="Liang Y."/>
            <person name="Lin X."/>
            <person name="Liu X."/>
            <person name="Mattei B."/>
            <person name="McIntosh T.C."/>
            <person name="McLeod M.P."/>
            <person name="McPherson D."/>
            <person name="Merkulov G."/>
            <person name="Milshina N.V."/>
            <person name="Mobarry C."/>
            <person name="Morris J."/>
            <person name="Moshrefi A."/>
            <person name="Mount S.M."/>
            <person name="Moy M."/>
            <person name="Murphy B."/>
            <person name="Murphy L."/>
            <person name="Muzny D.M."/>
            <person name="Nelson D.L."/>
            <person name="Nelson D.R."/>
            <person name="Nelson K.A."/>
            <person name="Nixon K."/>
            <person name="Nusskern D.R."/>
            <person name="Pacleb J.M."/>
            <person name="Palazzolo M."/>
            <person name="Pittman G.S."/>
            <person name="Pan S."/>
            <person name="Pollard J."/>
            <person name="Puri V."/>
            <person name="Reese M.G."/>
            <person name="Reinert K."/>
            <person name="Remington K."/>
            <person name="Saunders R.D.C."/>
            <person name="Scheeler F."/>
            <person name="Shen H."/>
            <person name="Shue B.C."/>
            <person name="Siden-Kiamos I."/>
            <person name="Simpson M."/>
            <person name="Skupski M.P."/>
            <person name="Smith T.J."/>
            <person name="Spier E."/>
            <person name="Spradling A.C."/>
            <person name="Stapleton M."/>
            <person name="Strong R."/>
            <person name="Sun E."/>
            <person name="Svirskas R."/>
            <person name="Tector C."/>
            <person name="Turner R."/>
            <person name="Venter E."/>
            <person name="Wang A.H."/>
            <person name="Wang X."/>
            <person name="Wang Z.-Y."/>
            <person name="Wassarman D.A."/>
            <person name="Weinstock G.M."/>
            <person name="Weissenbach J."/>
            <person name="Williams S.M."/>
            <person name="Woodage T."/>
            <person name="Worley K.C."/>
            <person name="Wu D."/>
            <person name="Yang S."/>
            <person name="Yao Q.A."/>
            <person name="Ye J."/>
            <person name="Yeh R.-F."/>
            <person name="Zaveri J.S."/>
            <person name="Zhan M."/>
            <person name="Zhang G."/>
            <person name="Zhao Q."/>
            <person name="Zheng L."/>
            <person name="Zheng X.H."/>
            <person name="Zhong F.N."/>
            <person name="Zhong W."/>
            <person name="Zhou X."/>
            <person name="Zhu S.C."/>
            <person name="Zhu X."/>
            <person name="Smith H.O."/>
            <person name="Gibbs R.A."/>
            <person name="Myers E.W."/>
            <person name="Rubin G.M."/>
            <person name="Venter J.C."/>
        </authorList>
    </citation>
    <scope>NUCLEOTIDE SEQUENCE [LARGE SCALE GENOMIC DNA]</scope>
    <source>
        <strain>Berkeley</strain>
    </source>
</reference>
<reference key="3">
    <citation type="journal article" date="2002" name="Genome Biol.">
        <title>Annotation of the Drosophila melanogaster euchromatic genome: a systematic review.</title>
        <authorList>
            <person name="Misra S."/>
            <person name="Crosby M.A."/>
            <person name="Mungall C.J."/>
            <person name="Matthews B.B."/>
            <person name="Campbell K.S."/>
            <person name="Hradecky P."/>
            <person name="Huang Y."/>
            <person name="Kaminker J.S."/>
            <person name="Millburn G.H."/>
            <person name="Prochnik S.E."/>
            <person name="Smith C.D."/>
            <person name="Tupy J.L."/>
            <person name="Whitfield E.J."/>
            <person name="Bayraktaroglu L."/>
            <person name="Berman B.P."/>
            <person name="Bettencourt B.R."/>
            <person name="Celniker S.E."/>
            <person name="de Grey A.D.N.J."/>
            <person name="Drysdale R.A."/>
            <person name="Harris N.L."/>
            <person name="Richter J."/>
            <person name="Russo S."/>
            <person name="Schroeder A.J."/>
            <person name="Shu S.Q."/>
            <person name="Stapleton M."/>
            <person name="Yamada C."/>
            <person name="Ashburner M."/>
            <person name="Gelbart W.M."/>
            <person name="Rubin G.M."/>
            <person name="Lewis S.E."/>
        </authorList>
    </citation>
    <scope>GENOME REANNOTATION</scope>
    <source>
        <strain>Berkeley</strain>
    </source>
</reference>
<reference key="4">
    <citation type="journal article" date="2002" name="Genome Biol.">
        <title>A Drosophila full-length cDNA resource.</title>
        <authorList>
            <person name="Stapleton M."/>
            <person name="Carlson J.W."/>
            <person name="Brokstein P."/>
            <person name="Yu C."/>
            <person name="Champe M."/>
            <person name="George R.A."/>
            <person name="Guarin H."/>
            <person name="Kronmiller B."/>
            <person name="Pacleb J.M."/>
            <person name="Park S."/>
            <person name="Wan K.H."/>
            <person name="Rubin G.M."/>
            <person name="Celniker S.E."/>
        </authorList>
    </citation>
    <scope>NUCLEOTIDE SEQUENCE [LARGE SCALE MRNA]</scope>
    <source>
        <strain>Berkeley</strain>
        <tissue>Testis</tissue>
    </source>
</reference>
<feature type="chain" id="PRO_0000096584" description="Male-specific sperm protein Mst84Db">
    <location>
        <begin position="1"/>
        <end position="74"/>
    </location>
</feature>
<feature type="sequence conflict" description="In Ref. 1; CAA47938." evidence="2" ref="1">
    <original>C</original>
    <variation>W</variation>
    <location>
        <position position="42"/>
    </location>
</feature>
<feature type="sequence conflict" description="In Ref. 1; CAA47938." evidence="2" ref="1">
    <original>P</original>
    <variation>L</variation>
    <location>
        <position position="60"/>
    </location>
</feature>
<evidence type="ECO:0000269" key="1">
    <source>
    </source>
</evidence>
<evidence type="ECO:0000305" key="2"/>